<feature type="chain" id="PRO_0000263595" description="Small ribosomal subunit protein uS12">
    <location>
        <begin position="1"/>
        <end position="147"/>
    </location>
</feature>
<feature type="region of interest" description="Disordered" evidence="3">
    <location>
        <begin position="1"/>
        <end position="22"/>
    </location>
</feature>
<feature type="modified residue" description="3-methylthioaspartic acid" evidence="1">
    <location>
        <position position="102"/>
    </location>
</feature>
<protein>
    <recommendedName>
        <fullName evidence="2">Small ribosomal subunit protein uS12</fullName>
    </recommendedName>
    <alternativeName>
        <fullName evidence="4">30S ribosomal protein S12</fullName>
    </alternativeName>
</protein>
<name>RS12_STRPB</name>
<comment type="function">
    <text evidence="2">With S4 and S5 plays an important role in translational accuracy.</text>
</comment>
<comment type="function">
    <text evidence="2">Interacts with and stabilizes bases of the 16S rRNA that are involved in tRNA selection in the A site and with the mRNA backbone. Located at the interface of the 30S and 50S subunits, it traverses the body of the 30S subunit contacting proteins on the other side and probably holding the rRNA structure together. The combined cluster of proteins S8, S12 and S17 appears to hold together the shoulder and platform of the 30S subunit.</text>
</comment>
<comment type="subunit">
    <text evidence="2">Part of the 30S ribosomal subunit. Contacts proteins S8 and S17. May interact with IF1 in the 30S initiation complex.</text>
</comment>
<comment type="similarity">
    <text evidence="2">Belongs to the universal ribosomal protein uS12 family.</text>
</comment>
<gene>
    <name evidence="2" type="primary">rpsL</name>
    <name type="ordered locus">MGAS2096_Spy0248</name>
</gene>
<evidence type="ECO:0000250" key="1"/>
<evidence type="ECO:0000255" key="2">
    <source>
        <dbReference type="HAMAP-Rule" id="MF_00403"/>
    </source>
</evidence>
<evidence type="ECO:0000256" key="3">
    <source>
        <dbReference type="SAM" id="MobiDB-lite"/>
    </source>
</evidence>
<evidence type="ECO:0000305" key="4"/>
<keyword id="KW-0488">Methylation</keyword>
<keyword id="KW-0687">Ribonucleoprotein</keyword>
<keyword id="KW-0689">Ribosomal protein</keyword>
<keyword id="KW-0694">RNA-binding</keyword>
<keyword id="KW-0699">rRNA-binding</keyword>
<keyword id="KW-0820">tRNA-binding</keyword>
<reference key="1">
    <citation type="journal article" date="2006" name="Proc. Natl. Acad. Sci. U.S.A.">
        <title>Molecular genetic anatomy of inter- and intraserotype variation in the human bacterial pathogen group A Streptococcus.</title>
        <authorList>
            <person name="Beres S.B."/>
            <person name="Richter E.W."/>
            <person name="Nagiec M.J."/>
            <person name="Sumby P."/>
            <person name="Porcella S.F."/>
            <person name="DeLeo F.R."/>
            <person name="Musser J.M."/>
        </authorList>
    </citation>
    <scope>NUCLEOTIDE SEQUENCE [LARGE SCALE GENOMIC DNA]</scope>
    <source>
        <strain>MGAS2096</strain>
    </source>
</reference>
<accession>Q1JDK8</accession>
<organism>
    <name type="scientific">Streptococcus pyogenes serotype M12 (strain MGAS2096)</name>
    <dbReference type="NCBI Taxonomy" id="370553"/>
    <lineage>
        <taxon>Bacteria</taxon>
        <taxon>Bacillati</taxon>
        <taxon>Bacillota</taxon>
        <taxon>Bacilli</taxon>
        <taxon>Lactobacillales</taxon>
        <taxon>Streptococcaceae</taxon>
        <taxon>Streptococcus</taxon>
    </lineage>
</organism>
<proteinExistence type="inferred from homology"/>
<dbReference type="EMBL" id="CP000261">
    <property type="protein sequence ID" value="ABF35300.1"/>
    <property type="molecule type" value="Genomic_DNA"/>
</dbReference>
<dbReference type="SMR" id="Q1JDK8"/>
<dbReference type="KEGG" id="spj:MGAS2096_Spy0248"/>
<dbReference type="HOGENOM" id="CLU_104295_1_2_9"/>
<dbReference type="GO" id="GO:0015935">
    <property type="term" value="C:small ribosomal subunit"/>
    <property type="evidence" value="ECO:0007669"/>
    <property type="project" value="InterPro"/>
</dbReference>
<dbReference type="GO" id="GO:0019843">
    <property type="term" value="F:rRNA binding"/>
    <property type="evidence" value="ECO:0007669"/>
    <property type="project" value="UniProtKB-UniRule"/>
</dbReference>
<dbReference type="GO" id="GO:0003735">
    <property type="term" value="F:structural constituent of ribosome"/>
    <property type="evidence" value="ECO:0007669"/>
    <property type="project" value="InterPro"/>
</dbReference>
<dbReference type="GO" id="GO:0000049">
    <property type="term" value="F:tRNA binding"/>
    <property type="evidence" value="ECO:0007669"/>
    <property type="project" value="UniProtKB-UniRule"/>
</dbReference>
<dbReference type="GO" id="GO:0006412">
    <property type="term" value="P:translation"/>
    <property type="evidence" value="ECO:0007669"/>
    <property type="project" value="UniProtKB-UniRule"/>
</dbReference>
<dbReference type="CDD" id="cd03368">
    <property type="entry name" value="Ribosomal_S12"/>
    <property type="match status" value="1"/>
</dbReference>
<dbReference type="FunFam" id="2.40.50.140:FF:000099">
    <property type="entry name" value="Ribosomal protein S12, mitochondrial"/>
    <property type="match status" value="1"/>
</dbReference>
<dbReference type="Gene3D" id="2.40.50.140">
    <property type="entry name" value="Nucleic acid-binding proteins"/>
    <property type="match status" value="1"/>
</dbReference>
<dbReference type="HAMAP" id="MF_00403_B">
    <property type="entry name" value="Ribosomal_uS12_B"/>
    <property type="match status" value="1"/>
</dbReference>
<dbReference type="InterPro" id="IPR012340">
    <property type="entry name" value="NA-bd_OB-fold"/>
</dbReference>
<dbReference type="InterPro" id="IPR006032">
    <property type="entry name" value="Ribosomal_uS12"/>
</dbReference>
<dbReference type="InterPro" id="IPR005679">
    <property type="entry name" value="Ribosomal_uS12_bac"/>
</dbReference>
<dbReference type="NCBIfam" id="TIGR00981">
    <property type="entry name" value="rpsL_bact"/>
    <property type="match status" value="1"/>
</dbReference>
<dbReference type="PANTHER" id="PTHR11652">
    <property type="entry name" value="30S RIBOSOMAL PROTEIN S12 FAMILY MEMBER"/>
    <property type="match status" value="1"/>
</dbReference>
<dbReference type="Pfam" id="PF00164">
    <property type="entry name" value="Ribosom_S12_S23"/>
    <property type="match status" value="1"/>
</dbReference>
<dbReference type="PRINTS" id="PR01034">
    <property type="entry name" value="RIBOSOMALS12"/>
</dbReference>
<dbReference type="SUPFAM" id="SSF50249">
    <property type="entry name" value="Nucleic acid-binding proteins"/>
    <property type="match status" value="1"/>
</dbReference>
<dbReference type="PROSITE" id="PS00055">
    <property type="entry name" value="RIBOSOMAL_S12"/>
    <property type="match status" value="1"/>
</dbReference>
<sequence length="147" mass="16294">MPTINQLVRKPRKSKIEKSDSPALNIGYNSHKKVQTKMAAPQKRGVATRVGTMTPKKPNSALRKFARVRLSNLIEVTAYIPGIGHNLQEHSVVLIRGGRVKDLPGVRYHIVRGALDTAGVADRNKAVLNTGRNVQKDNRRGIRENES</sequence>